<gene>
    <name evidence="1" type="primary">rplE</name>
    <name type="ordered locus">ABO_0409</name>
</gene>
<name>RL5_ALCBS</name>
<accession>Q0VSJ1</accession>
<reference key="1">
    <citation type="journal article" date="2006" name="Nat. Biotechnol.">
        <title>Genome sequence of the ubiquitous hydrocarbon-degrading marine bacterium Alcanivorax borkumensis.</title>
        <authorList>
            <person name="Schneiker S."/>
            <person name="Martins dos Santos V.A.P."/>
            <person name="Bartels D."/>
            <person name="Bekel T."/>
            <person name="Brecht M."/>
            <person name="Buhrmester J."/>
            <person name="Chernikova T.N."/>
            <person name="Denaro R."/>
            <person name="Ferrer M."/>
            <person name="Gertler C."/>
            <person name="Goesmann A."/>
            <person name="Golyshina O.V."/>
            <person name="Kaminski F."/>
            <person name="Khachane A.N."/>
            <person name="Lang S."/>
            <person name="Linke B."/>
            <person name="McHardy A.C."/>
            <person name="Meyer F."/>
            <person name="Nechitaylo T."/>
            <person name="Puehler A."/>
            <person name="Regenhardt D."/>
            <person name="Rupp O."/>
            <person name="Sabirova J.S."/>
            <person name="Selbitschka W."/>
            <person name="Yakimov M.M."/>
            <person name="Timmis K.N."/>
            <person name="Vorhoelter F.-J."/>
            <person name="Weidner S."/>
            <person name="Kaiser O."/>
            <person name="Golyshin P.N."/>
        </authorList>
    </citation>
    <scope>NUCLEOTIDE SEQUENCE [LARGE SCALE GENOMIC DNA]</scope>
    <source>
        <strain>ATCC 700651 / DSM 11573 / NCIMB 13689 / SK2</strain>
    </source>
</reference>
<comment type="function">
    <text evidence="1">This is one of the proteins that bind and probably mediate the attachment of the 5S RNA into the large ribosomal subunit, where it forms part of the central protuberance. In the 70S ribosome it contacts protein S13 of the 30S subunit (bridge B1b), connecting the 2 subunits; this bridge is implicated in subunit movement. Contacts the P site tRNA; the 5S rRNA and some of its associated proteins might help stabilize positioning of ribosome-bound tRNAs.</text>
</comment>
<comment type="subunit">
    <text evidence="1">Part of the 50S ribosomal subunit; part of the 5S rRNA/L5/L18/L25 subcomplex. Contacts the 5S rRNA and the P site tRNA. Forms a bridge to the 30S subunit in the 70S ribosome.</text>
</comment>
<comment type="similarity">
    <text evidence="1">Belongs to the universal ribosomal protein uL5 family.</text>
</comment>
<keyword id="KW-1185">Reference proteome</keyword>
<keyword id="KW-0687">Ribonucleoprotein</keyword>
<keyword id="KW-0689">Ribosomal protein</keyword>
<keyword id="KW-0694">RNA-binding</keyword>
<keyword id="KW-0699">rRNA-binding</keyword>
<keyword id="KW-0820">tRNA-binding</keyword>
<proteinExistence type="inferred from homology"/>
<sequence length="179" mass="20056">MSDLKKIYQDEIAPKLKEELGLGNIMEVPKITKITLNMGVGEASADRKAMEGALSDMTAISGQKPLVTNARKSVAGFKIREGWPIGCKVTMRNQRMYEFLERLVSVAIPRIRDFRGLNPKSFDGRGNFSMGLREQIVFPEIDFDKVDKLRGMDITITTTAKTDDEARALLRAFNFPLKG</sequence>
<organism>
    <name type="scientific">Alcanivorax borkumensis (strain ATCC 700651 / DSM 11573 / NCIMB 13689 / SK2)</name>
    <dbReference type="NCBI Taxonomy" id="393595"/>
    <lineage>
        <taxon>Bacteria</taxon>
        <taxon>Pseudomonadati</taxon>
        <taxon>Pseudomonadota</taxon>
        <taxon>Gammaproteobacteria</taxon>
        <taxon>Oceanospirillales</taxon>
        <taxon>Alcanivoracaceae</taxon>
        <taxon>Alcanivorax</taxon>
    </lineage>
</organism>
<evidence type="ECO:0000255" key="1">
    <source>
        <dbReference type="HAMAP-Rule" id="MF_01333"/>
    </source>
</evidence>
<evidence type="ECO:0000305" key="2"/>
<feature type="chain" id="PRO_1000052686" description="Large ribosomal subunit protein uL5">
    <location>
        <begin position="1"/>
        <end position="179"/>
    </location>
</feature>
<protein>
    <recommendedName>
        <fullName evidence="1">Large ribosomal subunit protein uL5</fullName>
    </recommendedName>
    <alternativeName>
        <fullName evidence="2">50S ribosomal protein L5</fullName>
    </alternativeName>
</protein>
<dbReference type="EMBL" id="AM286690">
    <property type="protein sequence ID" value="CAL15857.1"/>
    <property type="molecule type" value="Genomic_DNA"/>
</dbReference>
<dbReference type="RefSeq" id="WP_011587697.1">
    <property type="nucleotide sequence ID" value="NC_008260.1"/>
</dbReference>
<dbReference type="SMR" id="Q0VSJ1"/>
<dbReference type="STRING" id="393595.ABO_0409"/>
<dbReference type="KEGG" id="abo:ABO_0409"/>
<dbReference type="eggNOG" id="COG0094">
    <property type="taxonomic scope" value="Bacteria"/>
</dbReference>
<dbReference type="HOGENOM" id="CLU_061015_2_1_6"/>
<dbReference type="OrthoDB" id="9806626at2"/>
<dbReference type="Proteomes" id="UP000008871">
    <property type="component" value="Chromosome"/>
</dbReference>
<dbReference type="GO" id="GO:1990904">
    <property type="term" value="C:ribonucleoprotein complex"/>
    <property type="evidence" value="ECO:0007669"/>
    <property type="project" value="UniProtKB-KW"/>
</dbReference>
<dbReference type="GO" id="GO:0005840">
    <property type="term" value="C:ribosome"/>
    <property type="evidence" value="ECO:0007669"/>
    <property type="project" value="UniProtKB-KW"/>
</dbReference>
<dbReference type="GO" id="GO:0019843">
    <property type="term" value="F:rRNA binding"/>
    <property type="evidence" value="ECO:0007669"/>
    <property type="project" value="UniProtKB-UniRule"/>
</dbReference>
<dbReference type="GO" id="GO:0003735">
    <property type="term" value="F:structural constituent of ribosome"/>
    <property type="evidence" value="ECO:0007669"/>
    <property type="project" value="InterPro"/>
</dbReference>
<dbReference type="GO" id="GO:0000049">
    <property type="term" value="F:tRNA binding"/>
    <property type="evidence" value="ECO:0007669"/>
    <property type="project" value="UniProtKB-UniRule"/>
</dbReference>
<dbReference type="GO" id="GO:0006412">
    <property type="term" value="P:translation"/>
    <property type="evidence" value="ECO:0007669"/>
    <property type="project" value="UniProtKB-UniRule"/>
</dbReference>
<dbReference type="FunFam" id="3.30.1440.10:FF:000001">
    <property type="entry name" value="50S ribosomal protein L5"/>
    <property type="match status" value="1"/>
</dbReference>
<dbReference type="Gene3D" id="3.30.1440.10">
    <property type="match status" value="1"/>
</dbReference>
<dbReference type="HAMAP" id="MF_01333_B">
    <property type="entry name" value="Ribosomal_uL5_B"/>
    <property type="match status" value="1"/>
</dbReference>
<dbReference type="InterPro" id="IPR002132">
    <property type="entry name" value="Ribosomal_uL5"/>
</dbReference>
<dbReference type="InterPro" id="IPR020930">
    <property type="entry name" value="Ribosomal_uL5_bac-type"/>
</dbReference>
<dbReference type="InterPro" id="IPR031309">
    <property type="entry name" value="Ribosomal_uL5_C"/>
</dbReference>
<dbReference type="InterPro" id="IPR020929">
    <property type="entry name" value="Ribosomal_uL5_CS"/>
</dbReference>
<dbReference type="InterPro" id="IPR022803">
    <property type="entry name" value="Ribosomal_uL5_dom_sf"/>
</dbReference>
<dbReference type="InterPro" id="IPR031310">
    <property type="entry name" value="Ribosomal_uL5_N"/>
</dbReference>
<dbReference type="NCBIfam" id="NF000585">
    <property type="entry name" value="PRK00010.1"/>
    <property type="match status" value="1"/>
</dbReference>
<dbReference type="PANTHER" id="PTHR11994">
    <property type="entry name" value="60S RIBOSOMAL PROTEIN L11-RELATED"/>
    <property type="match status" value="1"/>
</dbReference>
<dbReference type="Pfam" id="PF00281">
    <property type="entry name" value="Ribosomal_L5"/>
    <property type="match status" value="1"/>
</dbReference>
<dbReference type="Pfam" id="PF00673">
    <property type="entry name" value="Ribosomal_L5_C"/>
    <property type="match status" value="1"/>
</dbReference>
<dbReference type="PIRSF" id="PIRSF002161">
    <property type="entry name" value="Ribosomal_L5"/>
    <property type="match status" value="1"/>
</dbReference>
<dbReference type="SUPFAM" id="SSF55282">
    <property type="entry name" value="RL5-like"/>
    <property type="match status" value="1"/>
</dbReference>
<dbReference type="PROSITE" id="PS00358">
    <property type="entry name" value="RIBOSOMAL_L5"/>
    <property type="match status" value="1"/>
</dbReference>